<reference key="1">
    <citation type="journal article" date="1997" name="Biochem. J.">
        <title>Mammalian actin-related protein 2/3 complex localizes to regions of lamellipodial protrusion and is composed of evolutionarily conserved proteins.</title>
        <authorList>
            <person name="Machesky L.M."/>
            <person name="Reeves E."/>
            <person name="Wientjes F."/>
            <person name="Mattheyse F.J."/>
            <person name="Grogan A."/>
            <person name="Totty N.F."/>
            <person name="Burlingame A.L."/>
            <person name="Hsuan J.J."/>
            <person name="Segal A.W."/>
        </authorList>
    </citation>
    <scope>NUCLEOTIDE SEQUENCE [MRNA]</scope>
    <scope>SUBCELLULAR LOCATION</scope>
</reference>
<reference key="2">
    <citation type="journal article" date="1997" name="J. Cell Biol.">
        <title>The human Arp2/3 complex is composed of evolutionarily conserved subunits and is localized to cellular regions of dynamic actin filament assembly.</title>
        <authorList>
            <person name="Welch M.D."/>
            <person name="Depace A.H."/>
            <person name="Verma S."/>
            <person name="Iwamatsu A."/>
            <person name="Mitchison T.J."/>
        </authorList>
    </citation>
    <scope>NUCLEOTIDE SEQUENCE [MRNA]</scope>
    <scope>IDENTIFICATION IN THE ARP2/2 COMPLEX</scope>
    <scope>SUBCELLULAR LOCATION</scope>
</reference>
<reference key="3">
    <citation type="submission" date="2004-05" db="EMBL/GenBank/DDBJ databases">
        <title>Cloning of human full open reading frames in Gateway(TM) system entry vector (pDONR201).</title>
        <authorList>
            <person name="Ebert L."/>
            <person name="Schick M."/>
            <person name="Neubert P."/>
            <person name="Schatten R."/>
            <person name="Henze S."/>
            <person name="Korn B."/>
        </authorList>
    </citation>
    <scope>NUCLEOTIDE SEQUENCE [LARGE SCALE MRNA]</scope>
</reference>
<reference key="4">
    <citation type="journal article" date="2004" name="Genome Res.">
        <title>The status, quality, and expansion of the NIH full-length cDNA project: the Mammalian Gene Collection (MGC).</title>
        <authorList>
            <consortium name="The MGC Project Team"/>
        </authorList>
    </citation>
    <scope>NUCLEOTIDE SEQUENCE [LARGE SCALE MRNA]</scope>
    <source>
        <tissue>Brain</tissue>
        <tissue>Skin</tissue>
    </source>
</reference>
<reference key="5">
    <citation type="journal article" date="2003" name="Nat. Biotechnol.">
        <title>Exploring proteomes and analyzing protein processing by mass spectrometric identification of sorted N-terminal peptides.</title>
        <authorList>
            <person name="Gevaert K."/>
            <person name="Goethals M."/>
            <person name="Martens L."/>
            <person name="Van Damme J."/>
            <person name="Staes A."/>
            <person name="Thomas G.R."/>
            <person name="Vandekerckhove J."/>
        </authorList>
    </citation>
    <scope>PROTEIN SEQUENCE OF 2-25</scope>
    <source>
        <tissue>Platelet</tissue>
    </source>
</reference>
<reference key="6">
    <citation type="journal article" date="2001" name="Mol. Cell">
        <title>Reconstitution of human Arp2/3 complex reveals critical roles of individual subunits in complex structure and activity.</title>
        <authorList>
            <person name="Gournier H."/>
            <person name="Goley E.D."/>
            <person name="Niederstrasser H."/>
            <person name="Trinh T."/>
            <person name="Welch M.D."/>
        </authorList>
    </citation>
    <scope>RECONSTITUTION OF THE ARP2/3 COMPLEX</scope>
</reference>
<reference key="7">
    <citation type="journal article" date="2009" name="Sci. Signal.">
        <title>Quantitative phosphoproteomic analysis of T cell receptor signaling reveals system-wide modulation of protein-protein interactions.</title>
        <authorList>
            <person name="Mayya V."/>
            <person name="Lundgren D.H."/>
            <person name="Hwang S.-I."/>
            <person name="Rezaul K."/>
            <person name="Wu L."/>
            <person name="Eng J.K."/>
            <person name="Rodionov V."/>
            <person name="Han D.K."/>
        </authorList>
    </citation>
    <scope>PHOSPHORYLATION [LARGE SCALE ANALYSIS] AT TYR-47</scope>
    <scope>IDENTIFICATION BY MASS SPECTROMETRY [LARGE SCALE ANALYSIS]</scope>
    <source>
        <tissue>Leukemic T-cell</tissue>
    </source>
</reference>
<reference key="8">
    <citation type="journal article" date="2009" name="Science">
        <title>Lysine acetylation targets protein complexes and co-regulates major cellular functions.</title>
        <authorList>
            <person name="Choudhary C."/>
            <person name="Kumar C."/>
            <person name="Gnad F."/>
            <person name="Nielsen M.L."/>
            <person name="Rehman M."/>
            <person name="Walther T.C."/>
            <person name="Olsen J.V."/>
            <person name="Mann M."/>
        </authorList>
    </citation>
    <scope>ACETYLATION [LARGE SCALE ANALYSIS] AT LYS-56 AND LYS-61</scope>
    <scope>IDENTIFICATION BY MASS SPECTROMETRY [LARGE SCALE ANALYSIS]</scope>
</reference>
<reference key="9">
    <citation type="journal article" date="2011" name="BMC Syst. Biol.">
        <title>Initial characterization of the human central proteome.</title>
        <authorList>
            <person name="Burkard T.R."/>
            <person name="Planyavsky M."/>
            <person name="Kaupe I."/>
            <person name="Breitwieser F.P."/>
            <person name="Buerckstuemmer T."/>
            <person name="Bennett K.L."/>
            <person name="Superti-Furga G."/>
            <person name="Colinge J."/>
        </authorList>
    </citation>
    <scope>IDENTIFICATION BY MASS SPECTROMETRY [LARGE SCALE ANALYSIS]</scope>
</reference>
<reference key="10">
    <citation type="journal article" date="2014" name="J. Proteomics">
        <title>An enzyme assisted RP-RPLC approach for in-depth analysis of human liver phosphoproteome.</title>
        <authorList>
            <person name="Bian Y."/>
            <person name="Song C."/>
            <person name="Cheng K."/>
            <person name="Dong M."/>
            <person name="Wang F."/>
            <person name="Huang J."/>
            <person name="Sun D."/>
            <person name="Wang L."/>
            <person name="Ye M."/>
            <person name="Zou H."/>
        </authorList>
    </citation>
    <scope>IDENTIFICATION BY MASS SPECTROMETRY [LARGE SCALE ANALYSIS]</scope>
    <source>
        <tissue>Liver</tissue>
    </source>
</reference>
<reference key="11">
    <citation type="journal article" date="2015" name="Proteomics">
        <title>N-terminome analysis of the human mitochondrial proteome.</title>
        <authorList>
            <person name="Vaca Jacome A.S."/>
            <person name="Rabilloud T."/>
            <person name="Schaeffer-Reiss C."/>
            <person name="Rompais M."/>
            <person name="Ayoub D."/>
            <person name="Lane L."/>
            <person name="Bairoch A."/>
            <person name="Van Dorsselaer A."/>
            <person name="Carapito C."/>
        </authorList>
    </citation>
    <scope>IDENTIFICATION BY MASS SPECTROMETRY [LARGE SCALE ANALYSIS]</scope>
</reference>
<reference key="12">
    <citation type="journal article" date="2017" name="Nat. Struct. Mol. Biol.">
        <title>Site-specific mapping of the human SUMO proteome reveals co-modification with phosphorylation.</title>
        <authorList>
            <person name="Hendriks I.A."/>
            <person name="Lyon D."/>
            <person name="Young C."/>
            <person name="Jensen L.J."/>
            <person name="Vertegaal A.C."/>
            <person name="Nielsen M.L."/>
        </authorList>
    </citation>
    <scope>SUMOYLATION [LARGE SCALE ANALYSIS] AT LYS-14</scope>
    <scope>IDENTIFICATION BY MASS SPECTROMETRY [LARGE SCALE ANALYSIS]</scope>
</reference>
<reference key="13">
    <citation type="journal article" date="2018" name="Nature">
        <title>Nuclear ARP2/3 drives DNA break clustering for homology-directed repair.</title>
        <authorList>
            <person name="Schrank B.R."/>
            <person name="Aparicio T."/>
            <person name="Li Y."/>
            <person name="Chang W."/>
            <person name="Chait B.T."/>
            <person name="Gundersen G.G."/>
            <person name="Gottesman M.E."/>
            <person name="Gautier J."/>
        </authorList>
    </citation>
    <scope>FUNCTION</scope>
    <scope>SUBCELLULAR LOCATION</scope>
</reference>
<comment type="function">
    <text evidence="3 4">Component of the Arp2/3 complex, a multiprotein complex that mediates actin polymerization upon stimulation by nucleation-promoting factor (NPF) (PubMed:9230079). The Arp2/3 complex mediates the formation of branched actin networks in the cytoplasm, providing the force for cell motility (PubMed:9230079). In addition to its role in the cytoplasmic cytoskeleton, the Arp2/3 complex also promotes actin polymerization in the nucleus, thereby regulating gene transcription and repair of damaged DNA (PubMed:29925947). The Arp2/3 complex promotes homologous recombination (HR) repair in response to DNA damage by promoting nuclear actin polymerization, leading to drive motility of double-strand breaks (DSBs) (PubMed:29925947).</text>
</comment>
<comment type="subunit">
    <text evidence="1 4">Component of the Arp2/3 complex composed of ACTR2/ARP2, ACTR3/ARP3, ARPC1B/p41-ARC, ARPC2/p34-ARC, ARPC3/p21-ARC, ARPC4/p20-ARC and ARPC5/p16-ARC.</text>
</comment>
<comment type="interaction">
    <interactant intactId="EBI-351829">
        <id>O15145</id>
    </interactant>
    <interactant intactId="EBI-351872">
        <id>P59998</id>
        <label>ARPC4</label>
    </interactant>
    <organismsDiffer>false</organismsDiffer>
    <experiments>6</experiments>
</comment>
<comment type="interaction">
    <interactant intactId="EBI-351829">
        <id>O15145</id>
    </interactant>
    <interactant intactId="EBI-348022">
        <id>P46092</id>
        <label>CCR10</label>
    </interactant>
    <organismsDiffer>false</organismsDiffer>
    <experiments>3</experiments>
</comment>
<comment type="interaction">
    <interactant intactId="EBI-351829">
        <id>O15145</id>
    </interactant>
    <interactant intactId="EBI-1054321">
        <id>Q68J44</id>
        <label>DUSP29</label>
    </interactant>
    <organismsDiffer>false</organismsDiffer>
    <experiments>3</experiments>
</comment>
<comment type="interaction">
    <interactant intactId="EBI-351829">
        <id>O15145</id>
    </interactant>
    <interactant intactId="EBI-8468186">
        <id>Q8IZU1</id>
        <label>FAM9A</label>
    </interactant>
    <organismsDiffer>false</organismsDiffer>
    <experiments>3</experiments>
</comment>
<comment type="interaction">
    <interactant intactId="EBI-351829">
        <id>O15145</id>
    </interactant>
    <interactant intactId="EBI-618309">
        <id>Q08379</id>
        <label>GOLGA2</label>
    </interactant>
    <organismsDiffer>false</organismsDiffer>
    <experiments>6</experiments>
</comment>
<comment type="interaction">
    <interactant intactId="EBI-351829">
        <id>O15145</id>
    </interactant>
    <interactant intactId="EBI-8643838">
        <id>O43365</id>
        <label>HOXA3</label>
    </interactant>
    <organismsDiffer>false</organismsDiffer>
    <experiments>6</experiments>
</comment>
<comment type="interaction">
    <interactant intactId="EBI-351829">
        <id>O15145</id>
    </interactant>
    <interactant intactId="EBI-17978514">
        <id>O95835-2</id>
        <label>LATS1</label>
    </interactant>
    <organismsDiffer>false</organismsDiffer>
    <experiments>3</experiments>
</comment>
<comment type="interaction">
    <interactant intactId="EBI-351829">
        <id>O15145</id>
    </interactant>
    <interactant intactId="EBI-746484">
        <id>P48552</id>
        <label>NRIP1</label>
    </interactant>
    <organismsDiffer>false</organismsDiffer>
    <experiments>3</experiments>
</comment>
<comment type="interaction">
    <interactant intactId="EBI-351829">
        <id>O15145</id>
    </interactant>
    <interactant intactId="EBI-11526590">
        <id>P14859-6</id>
        <label>POU2F1</label>
    </interactant>
    <organismsDiffer>false</organismsDiffer>
    <experiments>3</experiments>
</comment>
<comment type="interaction">
    <interactant intactId="EBI-351829">
        <id>O15145</id>
    </interactant>
    <interactant intactId="EBI-11322432">
        <id>Q8NC74</id>
        <label>RBBP8NL</label>
    </interactant>
    <organismsDiffer>false</organismsDiffer>
    <experiments>3</experiments>
</comment>
<comment type="interaction">
    <interactant intactId="EBI-351829">
        <id>O15145</id>
    </interactant>
    <interactant intactId="EBI-10192441">
        <id>Q86VR2</id>
        <label>RETREG3</label>
    </interactant>
    <organismsDiffer>false</organismsDiffer>
    <experiments>5</experiments>
</comment>
<comment type="interaction">
    <interactant intactId="EBI-351829">
        <id>O15145</id>
    </interactant>
    <interactant intactId="EBI-12816095">
        <id>Q9NX95-5</id>
        <label>SYBU</label>
    </interactant>
    <organismsDiffer>false</organismsDiffer>
    <experiments>3</experiments>
</comment>
<comment type="interaction">
    <interactant intactId="EBI-351829">
        <id>O15145</id>
    </interactant>
    <interactant intactId="EBI-1056629">
        <id>A2RTX5</id>
        <label>TARS3</label>
    </interactant>
    <organismsDiffer>false</organismsDiffer>
    <experiments>3</experiments>
</comment>
<comment type="interaction">
    <interactant intactId="EBI-351829">
        <id>O15145</id>
    </interactant>
    <interactant intactId="EBI-957615">
        <id>O00401</id>
        <label>WASL</label>
    </interactant>
    <organismsDiffer>false</organismsDiffer>
    <experiments>6</experiments>
</comment>
<comment type="interaction">
    <interactant intactId="EBI-351829">
        <id>O15145</id>
    </interactant>
    <interactant intactId="EBI-3921014">
        <id>Q9H609</id>
        <label>ZNF576</label>
    </interactant>
    <organismsDiffer>false</organismsDiffer>
    <experiments>3</experiments>
</comment>
<comment type="interaction">
    <interactant intactId="EBI-351829">
        <id>O15145</id>
    </interactant>
    <interactant intactId="EBI-25475856">
        <id>P0DTC9</id>
        <label>N</label>
    </interactant>
    <organismsDiffer>true</organismsDiffer>
    <experiments>5</experiments>
</comment>
<comment type="subcellular location">
    <subcellularLocation>
        <location evidence="4 5">Cytoplasm</location>
        <location evidence="4 5">Cytoskeleton</location>
    </subcellularLocation>
    <subcellularLocation>
        <location evidence="4 5">Cell projection</location>
    </subcellularLocation>
    <subcellularLocation>
        <location evidence="3">Nucleus</location>
    </subcellularLocation>
</comment>
<comment type="similarity">
    <text evidence="6">Belongs to the ARPC3 family.</text>
</comment>
<feature type="initiator methionine" description="Removed" evidence="2">
    <location>
        <position position="1"/>
    </location>
</feature>
<feature type="chain" id="PRO_0000124042" description="Actin-related protein 2/3 complex subunit 3">
    <location>
        <begin position="2"/>
        <end position="178"/>
    </location>
</feature>
<feature type="modified residue" description="Phosphotyrosine" evidence="8">
    <location>
        <position position="47"/>
    </location>
</feature>
<feature type="modified residue" description="N6-acetyllysine" evidence="7">
    <location>
        <position position="56"/>
    </location>
</feature>
<feature type="modified residue" description="N6-acetyllysine" evidence="7">
    <location>
        <position position="61"/>
    </location>
</feature>
<feature type="cross-link" description="Glycyl lysine isopeptide (Lys-Gly) (interchain with G-Cter in SUMO2)" evidence="9">
    <location>
        <position position="14"/>
    </location>
</feature>
<feature type="sequence conflict" description="In Ref. 1; AAB61466." evidence="6" ref="1">
    <original>Q</original>
    <variation>P</variation>
    <location>
        <position position="134"/>
    </location>
</feature>
<organism>
    <name type="scientific">Homo sapiens</name>
    <name type="common">Human</name>
    <dbReference type="NCBI Taxonomy" id="9606"/>
    <lineage>
        <taxon>Eukaryota</taxon>
        <taxon>Metazoa</taxon>
        <taxon>Chordata</taxon>
        <taxon>Craniata</taxon>
        <taxon>Vertebrata</taxon>
        <taxon>Euteleostomi</taxon>
        <taxon>Mammalia</taxon>
        <taxon>Eutheria</taxon>
        <taxon>Euarchontoglires</taxon>
        <taxon>Primates</taxon>
        <taxon>Haplorrhini</taxon>
        <taxon>Catarrhini</taxon>
        <taxon>Hominidae</taxon>
        <taxon>Homo</taxon>
    </lineage>
</organism>
<accession>O15145</accession>
<accession>O00554</accession>
<protein>
    <recommendedName>
        <fullName>Actin-related protein 2/3 complex subunit 3</fullName>
    </recommendedName>
    <alternativeName>
        <fullName>Arp2/3 complex 21 kDa subunit</fullName>
        <shortName>p21-ARC</shortName>
    </alternativeName>
</protein>
<proteinExistence type="evidence at protein level"/>
<name>ARPC3_HUMAN</name>
<keyword id="KW-0002">3D-structure</keyword>
<keyword id="KW-0007">Acetylation</keyword>
<keyword id="KW-0009">Actin-binding</keyword>
<keyword id="KW-0966">Cell projection</keyword>
<keyword id="KW-0963">Cytoplasm</keyword>
<keyword id="KW-0206">Cytoskeleton</keyword>
<keyword id="KW-0903">Direct protein sequencing</keyword>
<keyword id="KW-1017">Isopeptide bond</keyword>
<keyword id="KW-0539">Nucleus</keyword>
<keyword id="KW-0597">Phosphoprotein</keyword>
<keyword id="KW-1267">Proteomics identification</keyword>
<keyword id="KW-1185">Reference proteome</keyword>
<keyword id="KW-0832">Ubl conjugation</keyword>
<sequence length="178" mass="20547">MPAYHSSLMDPDTKLIGNMALLPIRSQFKGPAPRETKDTDIVDEAIYYFKANVFFKNYEIKNEADRTLIYITLYISECLKKLQKCNSKSQGEKEMYTLGITNFPIPGEPGFPLNAIYAKPANKQEDEVMRAYLQQLRQETGLRLCEKVFDPQNDKPSKWWTCFVKRQFMNKSLSGPGQ</sequence>
<dbReference type="EMBL" id="AF004561">
    <property type="protein sequence ID" value="AAB61466.1"/>
    <property type="molecule type" value="mRNA"/>
</dbReference>
<dbReference type="EMBL" id="AF006086">
    <property type="protein sequence ID" value="AAB64191.1"/>
    <property type="molecule type" value="mRNA"/>
</dbReference>
<dbReference type="EMBL" id="CR407667">
    <property type="protein sequence ID" value="CAG28595.1"/>
    <property type="molecule type" value="mRNA"/>
</dbReference>
<dbReference type="EMBL" id="BC067747">
    <property type="protein sequence ID" value="AAH67747.1"/>
    <property type="molecule type" value="mRNA"/>
</dbReference>
<dbReference type="EMBL" id="BC078162">
    <property type="protein sequence ID" value="AAH78162.1"/>
    <property type="molecule type" value="mRNA"/>
</dbReference>
<dbReference type="CCDS" id="CCDS9146.1"/>
<dbReference type="RefSeq" id="NP_001265485.1">
    <property type="nucleotide sequence ID" value="NM_001278556.2"/>
</dbReference>
<dbReference type="RefSeq" id="NP_001274151.1">
    <property type="nucleotide sequence ID" value="NM_001287222.1"/>
</dbReference>
<dbReference type="PDB" id="6UHC">
    <property type="method" value="EM"/>
    <property type="resolution" value="3.90 A"/>
    <property type="chains" value="E=1-178"/>
</dbReference>
<dbReference type="PDB" id="6YW6">
    <property type="method" value="EM"/>
    <property type="resolution" value="4.20 A"/>
    <property type="chains" value="E=1-178"/>
</dbReference>
<dbReference type="PDB" id="6YW7">
    <property type="method" value="EM"/>
    <property type="resolution" value="4.50 A"/>
    <property type="chains" value="E=1-178"/>
</dbReference>
<dbReference type="PDB" id="8P94">
    <property type="method" value="EM"/>
    <property type="resolution" value="3.30 A"/>
    <property type="chains" value="E=1-178"/>
</dbReference>
<dbReference type="PDBsum" id="6UHC"/>
<dbReference type="PDBsum" id="6YW6"/>
<dbReference type="PDBsum" id="6YW7"/>
<dbReference type="PDBsum" id="8P94"/>
<dbReference type="EMDB" id="EMD-10959"/>
<dbReference type="EMDB" id="EMD-10960"/>
<dbReference type="EMDB" id="EMD-17558"/>
<dbReference type="EMDB" id="EMD-20770"/>
<dbReference type="SMR" id="O15145"/>
<dbReference type="BioGRID" id="115401">
    <property type="interactions" value="203"/>
</dbReference>
<dbReference type="ComplexPortal" id="CPX-2490">
    <property type="entry name" value="Actin-related protein 2/3 complex, ARPC1A-ACTR3B-ARPC5 variant"/>
</dbReference>
<dbReference type="ComplexPortal" id="CPX-2579">
    <property type="entry name" value="Actin-related protein 2/3 complex, ARPC1B-ACTR3-ARPC5 variant"/>
</dbReference>
<dbReference type="ComplexPortal" id="CPX-2580">
    <property type="entry name" value="Actin-related protein 2/3 complex, ARPC1B-ACTR3B-ARPC5L variant"/>
</dbReference>
<dbReference type="ComplexPortal" id="CPX-2583">
    <property type="entry name" value="Actin-related protein 2/3 complex, ARPC1B-ACTR3B-ARPC5 variant"/>
</dbReference>
<dbReference type="ComplexPortal" id="CPX-2586">
    <property type="entry name" value="Actin-related protein 2/3 complex, ARPC1A-ACTR3-ARPC5 variant"/>
</dbReference>
<dbReference type="ComplexPortal" id="CPX-2592">
    <property type="entry name" value="Actin-related protein 2/3 complex, ARPC1A-ACTR3-ARPC5L variant"/>
</dbReference>
<dbReference type="ComplexPortal" id="CPX-2663">
    <property type="entry name" value="Actin-related protein 2/3 complex, ARPC1B-ACTR3-ARPC5L variant"/>
</dbReference>
<dbReference type="ComplexPortal" id="CPX-2668">
    <property type="entry name" value="Actin-related protein 2/3 complex, ARPC1B-ACTR3B-ARPC5L variant"/>
</dbReference>
<dbReference type="CORUM" id="O15145"/>
<dbReference type="DIP" id="DIP-33187N"/>
<dbReference type="FunCoup" id="O15145">
    <property type="interactions" value="2251"/>
</dbReference>
<dbReference type="IntAct" id="O15145">
    <property type="interactions" value="113"/>
</dbReference>
<dbReference type="MINT" id="O15145"/>
<dbReference type="STRING" id="9606.ENSP00000228825"/>
<dbReference type="DrugBank" id="DB08236">
    <property type="generic name" value="(2S)-2-(3-bromophenyl)-3-(5-chloro-2-hydroxyphenyl)-1,3-thiazolidin-4-one"/>
</dbReference>
<dbReference type="DrugBank" id="DB08235">
    <property type="generic name" value="N-[2-(2-methyl-1H-indol-3-yl)ethyl]thiophene-2-carboxamide"/>
</dbReference>
<dbReference type="GlyGen" id="O15145">
    <property type="glycosylation" value="1 site, 1 O-linked glycan (1 site)"/>
</dbReference>
<dbReference type="iPTMnet" id="O15145"/>
<dbReference type="PhosphoSitePlus" id="O15145"/>
<dbReference type="SwissPalm" id="O15145"/>
<dbReference type="BioMuta" id="ARPC3"/>
<dbReference type="OGP" id="O15145"/>
<dbReference type="jPOST" id="O15145"/>
<dbReference type="MassIVE" id="O15145"/>
<dbReference type="PaxDb" id="9606-ENSP00000228825"/>
<dbReference type="PeptideAtlas" id="O15145"/>
<dbReference type="ProteomicsDB" id="48470"/>
<dbReference type="Pumba" id="O15145"/>
<dbReference type="TopDownProteomics" id="O15145"/>
<dbReference type="Antibodypedia" id="1504">
    <property type="antibodies" value="243 antibodies from 34 providers"/>
</dbReference>
<dbReference type="DNASU" id="10094"/>
<dbReference type="Ensembl" id="ENST00000228825.12">
    <property type="protein sequence ID" value="ENSP00000228825.7"/>
    <property type="gene ID" value="ENSG00000111229.16"/>
</dbReference>
<dbReference type="GeneID" id="10094"/>
<dbReference type="KEGG" id="hsa:10094"/>
<dbReference type="MANE-Select" id="ENST00000228825.12">
    <property type="protein sequence ID" value="ENSP00000228825.7"/>
    <property type="RefSeq nucleotide sequence ID" value="NM_001278556.2"/>
    <property type="RefSeq protein sequence ID" value="NP_001265485.1"/>
</dbReference>
<dbReference type="UCSC" id="uc001tqq.5">
    <property type="organism name" value="human"/>
</dbReference>
<dbReference type="AGR" id="HGNC:706"/>
<dbReference type="CTD" id="10094"/>
<dbReference type="DisGeNET" id="10094"/>
<dbReference type="GeneCards" id="ARPC3"/>
<dbReference type="HGNC" id="HGNC:706">
    <property type="gene designation" value="ARPC3"/>
</dbReference>
<dbReference type="HPA" id="ENSG00000111229">
    <property type="expression patterns" value="Low tissue specificity"/>
</dbReference>
<dbReference type="MIM" id="604225">
    <property type="type" value="gene"/>
</dbReference>
<dbReference type="neXtProt" id="NX_O15145"/>
<dbReference type="OpenTargets" id="ENSG00000111229"/>
<dbReference type="PharmGKB" id="PA25000"/>
<dbReference type="VEuPathDB" id="HostDB:ENSG00000111229"/>
<dbReference type="eggNOG" id="KOG3155">
    <property type="taxonomic scope" value="Eukaryota"/>
</dbReference>
<dbReference type="GeneTree" id="ENSGT00390000018018"/>
<dbReference type="HOGENOM" id="CLU_094365_1_0_1"/>
<dbReference type="InParanoid" id="O15145"/>
<dbReference type="OMA" id="TPSKWWL"/>
<dbReference type="OrthoDB" id="200404at2759"/>
<dbReference type="PAN-GO" id="O15145">
    <property type="GO annotations" value="3 GO annotations based on evolutionary models"/>
</dbReference>
<dbReference type="PhylomeDB" id="O15145"/>
<dbReference type="TreeFam" id="TF314598"/>
<dbReference type="PathwayCommons" id="O15145"/>
<dbReference type="Reactome" id="R-HSA-2029482">
    <property type="pathway name" value="Regulation of actin dynamics for phagocytic cup formation"/>
</dbReference>
<dbReference type="Reactome" id="R-HSA-3928662">
    <property type="pathway name" value="EPHB-mediated forward signaling"/>
</dbReference>
<dbReference type="Reactome" id="R-HSA-5663213">
    <property type="pathway name" value="RHO GTPases Activate WASPs and WAVEs"/>
</dbReference>
<dbReference type="Reactome" id="R-HSA-8856828">
    <property type="pathway name" value="Clathrin-mediated endocytosis"/>
</dbReference>
<dbReference type="Reactome" id="R-HSA-9664422">
    <property type="pathway name" value="FCGR3A-mediated phagocytosis"/>
</dbReference>
<dbReference type="SignaLink" id="O15145"/>
<dbReference type="SIGNOR" id="O15145"/>
<dbReference type="BioGRID-ORCS" id="10094">
    <property type="hits" value="493 hits in 1152 CRISPR screens"/>
</dbReference>
<dbReference type="CD-CODE" id="91857CE7">
    <property type="entry name" value="Nucleolus"/>
</dbReference>
<dbReference type="CD-CODE" id="FB4E32DD">
    <property type="entry name" value="Presynaptic clusters and postsynaptic densities"/>
</dbReference>
<dbReference type="ChiTaRS" id="ARPC3">
    <property type="organism name" value="human"/>
</dbReference>
<dbReference type="GeneWiki" id="ARPC3"/>
<dbReference type="GenomeRNAi" id="10094"/>
<dbReference type="Pharos" id="O15145">
    <property type="development level" value="Tbio"/>
</dbReference>
<dbReference type="PRO" id="PR:O15145"/>
<dbReference type="Proteomes" id="UP000005640">
    <property type="component" value="Chromosome 12"/>
</dbReference>
<dbReference type="RNAct" id="O15145">
    <property type="molecule type" value="protein"/>
</dbReference>
<dbReference type="Bgee" id="ENSG00000111229">
    <property type="expression patterns" value="Expressed in monocyte and 111 other cell types or tissues"/>
</dbReference>
<dbReference type="ExpressionAtlas" id="O15145">
    <property type="expression patterns" value="baseline and differential"/>
</dbReference>
<dbReference type="GO" id="GO:0015629">
    <property type="term" value="C:actin cytoskeleton"/>
    <property type="evidence" value="ECO:0000304"/>
    <property type="project" value="ProtInc"/>
</dbReference>
<dbReference type="GO" id="GO:0005885">
    <property type="term" value="C:Arp2/3 protein complex"/>
    <property type="evidence" value="ECO:0000314"/>
    <property type="project" value="FlyBase"/>
</dbReference>
<dbReference type="GO" id="GO:0005829">
    <property type="term" value="C:cytosol"/>
    <property type="evidence" value="ECO:0000304"/>
    <property type="project" value="Reactome"/>
</dbReference>
<dbReference type="GO" id="GO:0070062">
    <property type="term" value="C:extracellular exosome"/>
    <property type="evidence" value="ECO:0007005"/>
    <property type="project" value="UniProtKB"/>
</dbReference>
<dbReference type="GO" id="GO:0031941">
    <property type="term" value="C:filamentous actin"/>
    <property type="evidence" value="ECO:0007669"/>
    <property type="project" value="Ensembl"/>
</dbReference>
<dbReference type="GO" id="GO:0005925">
    <property type="term" value="C:focal adhesion"/>
    <property type="evidence" value="ECO:0007005"/>
    <property type="project" value="UniProtKB"/>
</dbReference>
<dbReference type="GO" id="GO:0061850">
    <property type="term" value="C:growth cone leading edge"/>
    <property type="evidence" value="ECO:0007669"/>
    <property type="project" value="Ensembl"/>
</dbReference>
<dbReference type="GO" id="GO:0030027">
    <property type="term" value="C:lamellipodium"/>
    <property type="evidence" value="ECO:0000314"/>
    <property type="project" value="UniProtKB"/>
</dbReference>
<dbReference type="GO" id="GO:0016020">
    <property type="term" value="C:membrane"/>
    <property type="evidence" value="ECO:0007005"/>
    <property type="project" value="UniProtKB"/>
</dbReference>
<dbReference type="GO" id="GO:0005634">
    <property type="term" value="C:nucleus"/>
    <property type="evidence" value="ECO:0000250"/>
    <property type="project" value="UniProtKB"/>
</dbReference>
<dbReference type="GO" id="GO:0035861">
    <property type="term" value="C:site of double-strand break"/>
    <property type="evidence" value="ECO:0000250"/>
    <property type="project" value="UniProtKB"/>
</dbReference>
<dbReference type="GO" id="GO:0003779">
    <property type="term" value="F:actin binding"/>
    <property type="evidence" value="ECO:0007669"/>
    <property type="project" value="UniProtKB-KW"/>
</dbReference>
<dbReference type="GO" id="GO:0005200">
    <property type="term" value="F:structural constituent of cytoskeleton"/>
    <property type="evidence" value="ECO:0000314"/>
    <property type="project" value="FlyBase"/>
</dbReference>
<dbReference type="GO" id="GO:0070358">
    <property type="term" value="P:actin polymerization-dependent cell motility"/>
    <property type="evidence" value="ECO:0000304"/>
    <property type="project" value="UniProtKB"/>
</dbReference>
<dbReference type="GO" id="GO:0034314">
    <property type="term" value="P:Arp2/3 complex-mediated actin nucleation"/>
    <property type="evidence" value="ECO:0000314"/>
    <property type="project" value="FlyBase"/>
</dbReference>
<dbReference type="GO" id="GO:1990090">
    <property type="term" value="P:cellular response to nerve growth factor stimulus"/>
    <property type="evidence" value="ECO:0007669"/>
    <property type="project" value="Ensembl"/>
</dbReference>
<dbReference type="GO" id="GO:0030833">
    <property type="term" value="P:regulation of actin filament polymerization"/>
    <property type="evidence" value="ECO:0007669"/>
    <property type="project" value="InterPro"/>
</dbReference>
<dbReference type="GO" id="GO:1900242">
    <property type="term" value="P:regulation of synaptic vesicle endocytosis"/>
    <property type="evidence" value="ECO:0007669"/>
    <property type="project" value="Ensembl"/>
</dbReference>
<dbReference type="FunFam" id="1.10.1760.10:FF:000001">
    <property type="entry name" value="Actin-related protein 2/3 complex subunit 3"/>
    <property type="match status" value="1"/>
</dbReference>
<dbReference type="Gene3D" id="1.10.1760.10">
    <property type="entry name" value="Actin-related protein 2/3 complex subunit 3"/>
    <property type="match status" value="1"/>
</dbReference>
<dbReference type="InterPro" id="IPR007204">
    <property type="entry name" value="ARPC3"/>
</dbReference>
<dbReference type="InterPro" id="IPR036753">
    <property type="entry name" value="ARPC3_sf"/>
</dbReference>
<dbReference type="PANTHER" id="PTHR12391">
    <property type="entry name" value="ARP2/3 COMPLEX 21 KD SUBUNIT"/>
    <property type="match status" value="1"/>
</dbReference>
<dbReference type="Pfam" id="PF04062">
    <property type="entry name" value="P21-Arc"/>
    <property type="match status" value="1"/>
</dbReference>
<dbReference type="PIRSF" id="PIRSF016315">
    <property type="entry name" value="ARP2/3_P21-Arc"/>
    <property type="match status" value="1"/>
</dbReference>
<dbReference type="SUPFAM" id="SSF69060">
    <property type="entry name" value="Arp2/3 complex 21 kDa subunit ARPC3"/>
    <property type="match status" value="1"/>
</dbReference>
<evidence type="ECO:0000269" key="1">
    <source>
    </source>
</evidence>
<evidence type="ECO:0000269" key="2">
    <source>
    </source>
</evidence>
<evidence type="ECO:0000269" key="3">
    <source>
    </source>
</evidence>
<evidence type="ECO:0000269" key="4">
    <source>
    </source>
</evidence>
<evidence type="ECO:0000269" key="5">
    <source>
    </source>
</evidence>
<evidence type="ECO:0000305" key="6"/>
<evidence type="ECO:0007744" key="7">
    <source>
    </source>
</evidence>
<evidence type="ECO:0007744" key="8">
    <source>
    </source>
</evidence>
<evidence type="ECO:0007744" key="9">
    <source>
    </source>
</evidence>
<gene>
    <name type="primary">ARPC3</name>
    <name type="synonym">ARC21</name>
</gene>